<name>KTHY_CHLCV</name>
<comment type="function">
    <text evidence="1">Phosphorylation of dTMP to form dTDP in both de novo and salvage pathways of dTTP synthesis.</text>
</comment>
<comment type="catalytic activity">
    <reaction evidence="1">
        <text>dTMP + ATP = dTDP + ADP</text>
        <dbReference type="Rhea" id="RHEA:13517"/>
        <dbReference type="ChEBI" id="CHEBI:30616"/>
        <dbReference type="ChEBI" id="CHEBI:58369"/>
        <dbReference type="ChEBI" id="CHEBI:63528"/>
        <dbReference type="ChEBI" id="CHEBI:456216"/>
        <dbReference type="EC" id="2.7.4.9"/>
    </reaction>
</comment>
<comment type="similarity">
    <text evidence="1">Belongs to the thymidylate kinase family.</text>
</comment>
<protein>
    <recommendedName>
        <fullName evidence="1">Thymidylate kinase</fullName>
        <ecNumber evidence="1">2.7.4.9</ecNumber>
    </recommendedName>
    <alternativeName>
        <fullName evidence="1">dTMP kinase</fullName>
    </alternativeName>
</protein>
<feature type="chain" id="PRO_0000155259" description="Thymidylate kinase">
    <location>
        <begin position="1"/>
        <end position="207"/>
    </location>
</feature>
<feature type="binding site" evidence="1">
    <location>
        <begin position="7"/>
        <end position="14"/>
    </location>
    <ligand>
        <name>ATP</name>
        <dbReference type="ChEBI" id="CHEBI:30616"/>
    </ligand>
</feature>
<organism>
    <name type="scientific">Chlamydia caviae (strain ATCC VR-813 / DSM 19441 / 03DC25 / GPIC)</name>
    <name type="common">Chlamydophila caviae</name>
    <dbReference type="NCBI Taxonomy" id="227941"/>
    <lineage>
        <taxon>Bacteria</taxon>
        <taxon>Pseudomonadati</taxon>
        <taxon>Chlamydiota</taxon>
        <taxon>Chlamydiia</taxon>
        <taxon>Chlamydiales</taxon>
        <taxon>Chlamydiaceae</taxon>
        <taxon>Chlamydia/Chlamydophila group</taxon>
        <taxon>Chlamydia</taxon>
    </lineage>
</organism>
<proteinExistence type="inferred from homology"/>
<reference key="1">
    <citation type="journal article" date="2003" name="Nucleic Acids Res.">
        <title>Genome sequence of Chlamydophila caviae (Chlamydia psittaci GPIC): examining the role of niche-specific genes in the evolution of the Chlamydiaceae.</title>
        <authorList>
            <person name="Read T.D."/>
            <person name="Myers G.S.A."/>
            <person name="Brunham R.C."/>
            <person name="Nelson W.C."/>
            <person name="Paulsen I.T."/>
            <person name="Heidelberg J.F."/>
            <person name="Holtzapple E.K."/>
            <person name="Khouri H.M."/>
            <person name="Federova N.B."/>
            <person name="Carty H.A."/>
            <person name="Umayam L.A."/>
            <person name="Haft D.H."/>
            <person name="Peterson J.D."/>
            <person name="Beanan M.J."/>
            <person name="White O."/>
            <person name="Salzberg S.L."/>
            <person name="Hsia R.-C."/>
            <person name="McClarty G."/>
            <person name="Rank R.G."/>
            <person name="Bavoil P.M."/>
            <person name="Fraser C.M."/>
        </authorList>
    </citation>
    <scope>NUCLEOTIDE SEQUENCE [LARGE SCALE GENOMIC DNA]</scope>
    <source>
        <strain>ATCC VR-813 / DSM 19441 / 03DC25 / GPIC</strain>
    </source>
</reference>
<gene>
    <name evidence="1" type="primary">tmk</name>
    <name type="ordered locus">CCA_00508</name>
</gene>
<dbReference type="EC" id="2.7.4.9" evidence="1"/>
<dbReference type="EMBL" id="AE015925">
    <property type="protein sequence ID" value="AAP05252.1"/>
    <property type="molecule type" value="Genomic_DNA"/>
</dbReference>
<dbReference type="RefSeq" id="WP_011006468.1">
    <property type="nucleotide sequence ID" value="NC_003361.3"/>
</dbReference>
<dbReference type="SMR" id="Q823B7"/>
<dbReference type="STRING" id="227941.CCA_00508"/>
<dbReference type="KEGG" id="cca:CCA_00508"/>
<dbReference type="eggNOG" id="COG0125">
    <property type="taxonomic scope" value="Bacteria"/>
</dbReference>
<dbReference type="HOGENOM" id="CLU_049131_0_2_0"/>
<dbReference type="OrthoDB" id="9774907at2"/>
<dbReference type="Proteomes" id="UP000002193">
    <property type="component" value="Chromosome"/>
</dbReference>
<dbReference type="GO" id="GO:0005829">
    <property type="term" value="C:cytosol"/>
    <property type="evidence" value="ECO:0007669"/>
    <property type="project" value="TreeGrafter"/>
</dbReference>
<dbReference type="GO" id="GO:0005524">
    <property type="term" value="F:ATP binding"/>
    <property type="evidence" value="ECO:0007669"/>
    <property type="project" value="UniProtKB-UniRule"/>
</dbReference>
<dbReference type="GO" id="GO:0004798">
    <property type="term" value="F:dTMP kinase activity"/>
    <property type="evidence" value="ECO:0007669"/>
    <property type="project" value="UniProtKB-UniRule"/>
</dbReference>
<dbReference type="GO" id="GO:0006233">
    <property type="term" value="P:dTDP biosynthetic process"/>
    <property type="evidence" value="ECO:0007669"/>
    <property type="project" value="InterPro"/>
</dbReference>
<dbReference type="GO" id="GO:0006235">
    <property type="term" value="P:dTTP biosynthetic process"/>
    <property type="evidence" value="ECO:0007669"/>
    <property type="project" value="UniProtKB-UniRule"/>
</dbReference>
<dbReference type="GO" id="GO:0006227">
    <property type="term" value="P:dUDP biosynthetic process"/>
    <property type="evidence" value="ECO:0007669"/>
    <property type="project" value="TreeGrafter"/>
</dbReference>
<dbReference type="CDD" id="cd01672">
    <property type="entry name" value="TMPK"/>
    <property type="match status" value="1"/>
</dbReference>
<dbReference type="FunFam" id="3.40.50.300:FF:000225">
    <property type="entry name" value="Thymidylate kinase"/>
    <property type="match status" value="1"/>
</dbReference>
<dbReference type="Gene3D" id="3.40.50.300">
    <property type="entry name" value="P-loop containing nucleotide triphosphate hydrolases"/>
    <property type="match status" value="1"/>
</dbReference>
<dbReference type="HAMAP" id="MF_00165">
    <property type="entry name" value="Thymidylate_kinase"/>
    <property type="match status" value="1"/>
</dbReference>
<dbReference type="InterPro" id="IPR027417">
    <property type="entry name" value="P-loop_NTPase"/>
</dbReference>
<dbReference type="InterPro" id="IPR039430">
    <property type="entry name" value="Thymidylate_kin-like_dom"/>
</dbReference>
<dbReference type="InterPro" id="IPR018095">
    <property type="entry name" value="Thymidylate_kin_CS"/>
</dbReference>
<dbReference type="InterPro" id="IPR018094">
    <property type="entry name" value="Thymidylate_kinase"/>
</dbReference>
<dbReference type="NCBIfam" id="TIGR00041">
    <property type="entry name" value="DTMP_kinase"/>
    <property type="match status" value="1"/>
</dbReference>
<dbReference type="PANTHER" id="PTHR10344">
    <property type="entry name" value="THYMIDYLATE KINASE"/>
    <property type="match status" value="1"/>
</dbReference>
<dbReference type="PANTHER" id="PTHR10344:SF4">
    <property type="entry name" value="UMP-CMP KINASE 2, MITOCHONDRIAL"/>
    <property type="match status" value="1"/>
</dbReference>
<dbReference type="Pfam" id="PF02223">
    <property type="entry name" value="Thymidylate_kin"/>
    <property type="match status" value="1"/>
</dbReference>
<dbReference type="SUPFAM" id="SSF52540">
    <property type="entry name" value="P-loop containing nucleoside triphosphate hydrolases"/>
    <property type="match status" value="1"/>
</dbReference>
<dbReference type="PROSITE" id="PS01331">
    <property type="entry name" value="THYMIDYLATE_KINASE"/>
    <property type="match status" value="1"/>
</dbReference>
<sequence length="207" mass="22970">MFIVIEGCEGSGKSSLTELLKDRLIAEGKAVVATREPGGSPLGERVRDLILEPSTPSISPYTELFLFLAARAEHITKKIFPALESGNIVICDRFHDSTIVYQGIAEGLGKEYVTSLCHHVVGEKKFLPDLTCLLDIPADEGLRRKQQQKSLDKFEDKPLAYHTKIREGFLSLAEAHPNSYLILDGRQPLEESLNKVMTAYTELALCK</sequence>
<keyword id="KW-0067">ATP-binding</keyword>
<keyword id="KW-0418">Kinase</keyword>
<keyword id="KW-0545">Nucleotide biosynthesis</keyword>
<keyword id="KW-0547">Nucleotide-binding</keyword>
<keyword id="KW-0808">Transferase</keyword>
<evidence type="ECO:0000255" key="1">
    <source>
        <dbReference type="HAMAP-Rule" id="MF_00165"/>
    </source>
</evidence>
<accession>Q823B7</accession>